<dbReference type="EMBL" id="Z49211">
    <property type="protein sequence ID" value="CAA89129.1"/>
    <property type="molecule type" value="Genomic_DNA"/>
</dbReference>
<dbReference type="EMBL" id="AY693066">
    <property type="protein sequence ID" value="AAT93085.1"/>
    <property type="molecule type" value="Genomic_DNA"/>
</dbReference>
<dbReference type="EMBL" id="BK006946">
    <property type="protein sequence ID" value="DAA09924.1"/>
    <property type="molecule type" value="Genomic_DNA"/>
</dbReference>
<dbReference type="PIR" id="S54028">
    <property type="entry name" value="S54028"/>
</dbReference>
<dbReference type="RefSeq" id="NP_013739.1">
    <property type="nucleotide sequence ID" value="NM_001182522.1"/>
</dbReference>
<dbReference type="PDB" id="7T9X">
    <property type="method" value="X-ray"/>
    <property type="resolution" value="1.52 A"/>
    <property type="chains" value="A/B=330-397"/>
</dbReference>
<dbReference type="PDBsum" id="7T9X"/>
<dbReference type="SMR" id="Q04370"/>
<dbReference type="BioGRID" id="35198">
    <property type="interactions" value="257"/>
</dbReference>
<dbReference type="ComplexPortal" id="CPX-1903">
    <property type="entry name" value="PEX2-PEX10-PEX12 ubiquitin ligase complex"/>
</dbReference>
<dbReference type="DIP" id="DIP-7940N"/>
<dbReference type="FunCoup" id="Q04370">
    <property type="interactions" value="633"/>
</dbReference>
<dbReference type="IntAct" id="Q04370">
    <property type="interactions" value="12"/>
</dbReference>
<dbReference type="MINT" id="Q04370"/>
<dbReference type="STRING" id="4932.YMR026C"/>
<dbReference type="TCDB" id="3.A.20.1.5">
    <property type="family name" value="the peroxisomal protein importer (ppi) family"/>
</dbReference>
<dbReference type="PaxDb" id="4932-YMR026C"/>
<dbReference type="PeptideAtlas" id="Q04370"/>
<dbReference type="EnsemblFungi" id="YMR026C_mRNA">
    <property type="protein sequence ID" value="YMR026C"/>
    <property type="gene ID" value="YMR026C"/>
</dbReference>
<dbReference type="GeneID" id="855041"/>
<dbReference type="KEGG" id="sce:YMR026C"/>
<dbReference type="AGR" id="SGD:S000004628"/>
<dbReference type="SGD" id="S000004628">
    <property type="gene designation" value="PEX12"/>
</dbReference>
<dbReference type="VEuPathDB" id="FungiDB:YMR026C"/>
<dbReference type="eggNOG" id="KOG0826">
    <property type="taxonomic scope" value="Eukaryota"/>
</dbReference>
<dbReference type="GeneTree" id="ENSGT00390000016209"/>
<dbReference type="HOGENOM" id="CLU_031067_0_0_1"/>
<dbReference type="InParanoid" id="Q04370"/>
<dbReference type="OMA" id="VYCWKCI"/>
<dbReference type="OrthoDB" id="107372at2759"/>
<dbReference type="BioCyc" id="YEAST:G3O-32731-MONOMER"/>
<dbReference type="Reactome" id="R-SCE-8866654">
    <property type="pathway name" value="E3 ubiquitin ligases ubiquitinate target proteins"/>
</dbReference>
<dbReference type="Reactome" id="R-SCE-9033241">
    <property type="pathway name" value="Peroxisomal protein import"/>
</dbReference>
<dbReference type="Reactome" id="R-SCE-9603798">
    <property type="pathway name" value="Class I peroxisomal membrane protein import"/>
</dbReference>
<dbReference type="UniPathway" id="UPA00143"/>
<dbReference type="BioGRID-ORCS" id="855041">
    <property type="hits" value="1 hit in 10 CRISPR screens"/>
</dbReference>
<dbReference type="PRO" id="PR:Q04370"/>
<dbReference type="Proteomes" id="UP000002311">
    <property type="component" value="Chromosome XIII"/>
</dbReference>
<dbReference type="RNAct" id="Q04370">
    <property type="molecule type" value="protein"/>
</dbReference>
<dbReference type="GO" id="GO:1990429">
    <property type="term" value="C:peroxisomal importomer complex"/>
    <property type="evidence" value="ECO:0000314"/>
    <property type="project" value="SGD"/>
</dbReference>
<dbReference type="GO" id="GO:0005778">
    <property type="term" value="C:peroxisomal membrane"/>
    <property type="evidence" value="ECO:0000314"/>
    <property type="project" value="UniProtKB"/>
</dbReference>
<dbReference type="GO" id="GO:1902495">
    <property type="term" value="C:transmembrane transporter complex"/>
    <property type="evidence" value="ECO:0000314"/>
    <property type="project" value="UniProt"/>
</dbReference>
<dbReference type="GO" id="GO:0000151">
    <property type="term" value="C:ubiquitin ligase complex"/>
    <property type="evidence" value="ECO:0000353"/>
    <property type="project" value="ComplexPortal"/>
</dbReference>
<dbReference type="GO" id="GO:0008320">
    <property type="term" value="F:protein transmembrane transporter activity"/>
    <property type="evidence" value="ECO:0000314"/>
    <property type="project" value="UniProtKB"/>
</dbReference>
<dbReference type="GO" id="GO:1990757">
    <property type="term" value="F:ubiquitin ligase activator activity"/>
    <property type="evidence" value="ECO:0000314"/>
    <property type="project" value="UniProtKB"/>
</dbReference>
<dbReference type="GO" id="GO:0061630">
    <property type="term" value="F:ubiquitin protein ligase activity"/>
    <property type="evidence" value="ECO:0000314"/>
    <property type="project" value="SGD"/>
</dbReference>
<dbReference type="GO" id="GO:0004842">
    <property type="term" value="F:ubiquitin-protein transferase activity"/>
    <property type="evidence" value="ECO:0000318"/>
    <property type="project" value="GO_Central"/>
</dbReference>
<dbReference type="GO" id="GO:0008270">
    <property type="term" value="F:zinc ion binding"/>
    <property type="evidence" value="ECO:0007669"/>
    <property type="project" value="UniProtKB-KW"/>
</dbReference>
<dbReference type="GO" id="GO:0043161">
    <property type="term" value="P:proteasome-mediated ubiquitin-dependent protein catabolic process"/>
    <property type="evidence" value="ECO:0000314"/>
    <property type="project" value="UniProt"/>
</dbReference>
<dbReference type="GO" id="GO:0016558">
    <property type="term" value="P:protein import into peroxisome matrix"/>
    <property type="evidence" value="ECO:0000315"/>
    <property type="project" value="SGD"/>
</dbReference>
<dbReference type="GO" id="GO:0016562">
    <property type="term" value="P:protein import into peroxisome matrix, receptor recycling"/>
    <property type="evidence" value="ECO:0000314"/>
    <property type="project" value="UniProtKB"/>
</dbReference>
<dbReference type="GO" id="GO:0044721">
    <property type="term" value="P:protein import into peroxisome matrix, substrate release"/>
    <property type="evidence" value="ECO:0000314"/>
    <property type="project" value="UniProtKB"/>
</dbReference>
<dbReference type="GO" id="GO:0006513">
    <property type="term" value="P:protein monoubiquitination"/>
    <property type="evidence" value="ECO:0000318"/>
    <property type="project" value="GO_Central"/>
</dbReference>
<dbReference type="GO" id="GO:0000209">
    <property type="term" value="P:protein polyubiquitination"/>
    <property type="evidence" value="ECO:0000314"/>
    <property type="project" value="UniProt"/>
</dbReference>
<dbReference type="GO" id="GO:0016567">
    <property type="term" value="P:protein ubiquitination"/>
    <property type="evidence" value="ECO:0000314"/>
    <property type="project" value="ComplexPortal"/>
</dbReference>
<dbReference type="FunFam" id="3.30.40.10:FF:000659">
    <property type="entry name" value="Peroxisome assembly protein 12"/>
    <property type="match status" value="1"/>
</dbReference>
<dbReference type="Gene3D" id="3.30.40.10">
    <property type="entry name" value="Zinc/RING finger domain, C3HC4 (zinc finger)"/>
    <property type="match status" value="1"/>
</dbReference>
<dbReference type="InterPro" id="IPR017375">
    <property type="entry name" value="PEX12"/>
</dbReference>
<dbReference type="InterPro" id="IPR006845">
    <property type="entry name" value="Pex_N"/>
</dbReference>
<dbReference type="InterPro" id="IPR013083">
    <property type="entry name" value="Znf_RING/FYVE/PHD"/>
</dbReference>
<dbReference type="PANTHER" id="PTHR12888:SF0">
    <property type="entry name" value="PEROXISOME ASSEMBLY PROTEIN 12"/>
    <property type="match status" value="1"/>
</dbReference>
<dbReference type="PANTHER" id="PTHR12888">
    <property type="entry name" value="PEROXISOME ASSEMBLY PROTEIN 12 PEROXIN-12"/>
    <property type="match status" value="1"/>
</dbReference>
<dbReference type="Pfam" id="PF04757">
    <property type="entry name" value="Pex2_Pex12"/>
    <property type="match status" value="1"/>
</dbReference>
<dbReference type="PIRSF" id="PIRSF038074">
    <property type="entry name" value="Peroxisome_assembly_p12"/>
    <property type="match status" value="1"/>
</dbReference>
<dbReference type="SUPFAM" id="SSF57850">
    <property type="entry name" value="RING/U-box"/>
    <property type="match status" value="1"/>
</dbReference>
<protein>
    <recommendedName>
        <fullName evidence="11">Peroxisome assembly protein 12</fullName>
    </recommendedName>
    <alternativeName>
        <fullName evidence="11">Peroxin-12</fullName>
    </alternativeName>
</protein>
<comment type="function">
    <text evidence="4 6 7 8 9">Component of a retrotranslocation channel required for peroxisome organization by mediating export of the PEX5 receptor from peroxisomes to the cytosol, thereby promoting PEX5 recycling (PubMed:11370741, PubMed:19687296, PubMed:22471590, PubMed:35768507, PubMed:9090384). The retrotranslocation channel is composed of PEX2, PEX10 and PEX12; each subunit contributing transmembrane segments that coassemble into an open channel that specifically allows the passage of PEX5 through the peroxisomal membrane (PubMed:35768507). PEX12 also regulates PEX5 recycling by activating the E3 ubiquitin-protein ligase activity of PEX10 (PubMed:35768507). When PEX5 recycling is compromised, PEX12 stimulates PEX10-mediated polyubiquitination of PEX5, leading to its subsequent degradation (PubMed:35768507).</text>
</comment>
<comment type="pathway">
    <text evidence="6 7 8">Protein modification; protein ubiquitination.</text>
</comment>
<comment type="subunit">
    <text evidence="7 8">Component of the PEX2-PEX10-PEX12 retrotranslocation channel, composed of PEX2, PEX10 and PEX12.</text>
</comment>
<comment type="interaction">
    <interactant intactId="EBI-2077297">
        <id>Q04370</id>
    </interactant>
    <interactant intactId="EBI-13194">
        <id>Q05568</id>
        <label>PEX10</label>
    </interactant>
    <organismsDiffer>false</organismsDiffer>
    <experiments>13</experiments>
</comment>
<comment type="interaction">
    <interactant intactId="EBI-2077297">
        <id>Q04370</id>
    </interactant>
    <interactant intactId="EBI-13206">
        <id>P80667</id>
        <label>PEX13</label>
    </interactant>
    <organismsDiffer>false</organismsDiffer>
    <experiments>7</experiments>
</comment>
<comment type="subcellular location">
    <subcellularLocation>
        <location evidence="4 8">Peroxisome membrane</location>
        <topology evidence="2">Multi-pass membrane protein</topology>
    </subcellularLocation>
</comment>
<comment type="domain">
    <text evidence="1">The three subunits of the retrotranslocation channel (PEX2, PEX10 and PEX12) coassemble in the membrane into a channel with an open 10 Angstrom pore (By similarity). The RING-type zinc-fingers that catalyze PEX5 receptor ubiquitination are positioned above the pore on the cytosolic side of the complex (By similarity).</text>
</comment>
<comment type="domain">
    <text evidence="8">The RING-type zinc-finger is degenerated and only coordinates one zinc ions, preventing E3 ubiquitin-protein ligase activity.</text>
</comment>
<comment type="miscellaneous">
    <text evidence="5">Present with 907 molecules/cell in log phase SD medium.</text>
</comment>
<comment type="similarity">
    <text evidence="11">Belongs to the pex2/pex10/pex12 family.</text>
</comment>
<accession>Q04370</accession>
<accession>D6VZK0</accession>
<accession>Q6B1L4</accession>
<sequence length="399" mass="45992">MSFYSNLPSAGQSSRGSSTSGRNGVGLEPLYPTIFEIMSSQEIDSLLPASIRYLLANHLVANFPNRYTLRLNKYFFEWFQAIKGFVEWYHLKTYNSTFIDRFYGLQLFSSRDRNLALTQCLNPKGQSEWPQGLQLNQQQKSVIFLEKIILPYITAKLDEILEKISMNNIFSSDETENKWPKRAFLRIYPFIKKLLALSNLLVKLLFLTKRTGSVSLLQYLFKIEYTTVRPLSSELSGLKETKGMDNRLRKTNISSIFALMQGQLSIIPRFLTFMGSQFFPTFIFVLRVYQWWTTQDMTTKLQKRVNDLDEDIPRPPFSSHSDKTEDKEGVSEACPVCEKTVQNPCVLETGYVACYPCAISYLVNNEGHCPVTNKKLLGCTYNKHTNKWEVVTGIRKLLI</sequence>
<keyword id="KW-0002">3D-structure</keyword>
<keyword id="KW-0472">Membrane</keyword>
<keyword id="KW-0479">Metal-binding</keyword>
<keyword id="KW-0576">Peroxisome</keyword>
<keyword id="KW-0653">Protein transport</keyword>
<keyword id="KW-1185">Reference proteome</keyword>
<keyword id="KW-0812">Transmembrane</keyword>
<keyword id="KW-1133">Transmembrane helix</keyword>
<keyword id="KW-0813">Transport</keyword>
<keyword id="KW-0833">Ubl conjugation pathway</keyword>
<keyword id="KW-0862">Zinc</keyword>
<keyword id="KW-0863">Zinc-finger</keyword>
<gene>
    <name evidence="10 12" type="primary">PEX12</name>
    <name type="ordered locus">YMR026C</name>
    <name type="ORF">YM9711.16C</name>
</gene>
<name>PEX12_YEAST</name>
<feature type="chain" id="PRO_0000218617" description="Peroxisome assembly protein 12">
    <location>
        <begin position="1"/>
        <end position="399"/>
    </location>
</feature>
<feature type="topological domain" description="Peroxisomal matrix" evidence="1">
    <location>
        <begin position="1"/>
        <end position="33"/>
    </location>
</feature>
<feature type="transmembrane region" description="Helical; Name=TM1" evidence="1">
    <location>
        <begin position="34"/>
        <end position="62"/>
    </location>
</feature>
<feature type="topological domain" description="Cytoplasmic" evidence="1">
    <location>
        <begin position="63"/>
        <end position="67"/>
    </location>
</feature>
<feature type="transmembrane region" description="Helical; Name=TM2" evidence="1">
    <location>
        <begin position="68"/>
        <end position="92"/>
    </location>
</feature>
<feature type="topological domain" description="Peroxisomal matrix" evidence="1">
    <location>
        <begin position="93"/>
        <end position="136"/>
    </location>
</feature>
<feature type="transmembrane region" description="Helical; Name=TM3" evidence="1">
    <location>
        <begin position="137"/>
        <end position="168"/>
    </location>
</feature>
<feature type="topological domain" description="Cytoplasmic" evidence="1">
    <location>
        <begin position="169"/>
        <end position="171"/>
    </location>
</feature>
<feature type="transmembrane region" description="Helical; Name=TM4" evidence="1">
    <location>
        <begin position="172"/>
        <end position="208"/>
    </location>
</feature>
<feature type="topological domain" description="Peroxisomal matrix" evidence="1">
    <location>
        <begin position="209"/>
        <end position="277"/>
    </location>
</feature>
<feature type="transmembrane region" description="Helical; Name=TM5" evidence="1">
    <location>
        <begin position="278"/>
        <end position="305"/>
    </location>
</feature>
<feature type="topological domain" description="Cytoplasmic" evidence="1">
    <location>
        <begin position="306"/>
        <end position="399"/>
    </location>
</feature>
<feature type="zinc finger region" description="RING-type; degenerate">
    <location>
        <begin position="334"/>
        <end position="373"/>
    </location>
</feature>
<feature type="region of interest" description="Disordered" evidence="3">
    <location>
        <begin position="1"/>
        <end position="24"/>
    </location>
</feature>
<feature type="compositionally biased region" description="Low complexity" evidence="3">
    <location>
        <begin position="9"/>
        <end position="24"/>
    </location>
</feature>
<feature type="binding site" evidence="8 13">
    <location>
        <position position="334"/>
    </location>
    <ligand>
        <name>Zn(2+)</name>
        <dbReference type="ChEBI" id="CHEBI:29105"/>
    </ligand>
</feature>
<feature type="binding site" evidence="8 13">
    <location>
        <position position="337"/>
    </location>
    <ligand>
        <name>Zn(2+)</name>
        <dbReference type="ChEBI" id="CHEBI:29105"/>
    </ligand>
</feature>
<feature type="binding site" evidence="8 13">
    <location>
        <position position="354"/>
    </location>
    <ligand>
        <name>Zn(2+)</name>
        <dbReference type="ChEBI" id="CHEBI:29105"/>
    </ligand>
</feature>
<feature type="binding site" evidence="8 13">
    <location>
        <position position="357"/>
    </location>
    <ligand>
        <name>Zn(2+)</name>
        <dbReference type="ChEBI" id="CHEBI:29105"/>
    </ligand>
</feature>
<feature type="mutagenesis site" description="Abolished zinc-binding and folding, leading to impaired protein import into peroxisomes." evidence="8">
    <original>C</original>
    <variation>S</variation>
    <location>
        <position position="354"/>
    </location>
</feature>
<feature type="sequence conflict" description="In Ref. 3; AAT93085." evidence="11" ref="3">
    <original>I</original>
    <variation>T</variation>
    <location>
        <position position="37"/>
    </location>
</feature>
<feature type="strand" evidence="14">
    <location>
        <begin position="330"/>
        <end position="333"/>
    </location>
</feature>
<feature type="turn" evidence="14">
    <location>
        <begin position="335"/>
        <end position="337"/>
    </location>
</feature>
<feature type="strand" evidence="14">
    <location>
        <begin position="342"/>
        <end position="346"/>
    </location>
</feature>
<feature type="strand" evidence="14">
    <location>
        <begin position="352"/>
        <end position="354"/>
    </location>
</feature>
<feature type="helix" evidence="14">
    <location>
        <begin position="355"/>
        <end position="364"/>
    </location>
</feature>
<feature type="turn" evidence="14">
    <location>
        <begin position="365"/>
        <end position="367"/>
    </location>
</feature>
<feature type="turn" evidence="14">
    <location>
        <begin position="370"/>
        <end position="372"/>
    </location>
</feature>
<feature type="strand" evidence="14">
    <location>
        <begin position="379"/>
        <end position="382"/>
    </location>
</feature>
<feature type="turn" evidence="14">
    <location>
        <begin position="383"/>
        <end position="386"/>
    </location>
</feature>
<feature type="strand" evidence="14">
    <location>
        <begin position="387"/>
        <end position="390"/>
    </location>
</feature>
<organism>
    <name type="scientific">Saccharomyces cerevisiae (strain ATCC 204508 / S288c)</name>
    <name type="common">Baker's yeast</name>
    <dbReference type="NCBI Taxonomy" id="559292"/>
    <lineage>
        <taxon>Eukaryota</taxon>
        <taxon>Fungi</taxon>
        <taxon>Dikarya</taxon>
        <taxon>Ascomycota</taxon>
        <taxon>Saccharomycotina</taxon>
        <taxon>Saccharomycetes</taxon>
        <taxon>Saccharomycetales</taxon>
        <taxon>Saccharomycetaceae</taxon>
        <taxon>Saccharomyces</taxon>
    </lineage>
</organism>
<reference key="1">
    <citation type="journal article" date="1997" name="Nature">
        <title>The nucleotide sequence of Saccharomyces cerevisiae chromosome XIII.</title>
        <authorList>
            <person name="Bowman S."/>
            <person name="Churcher C.M."/>
            <person name="Badcock K."/>
            <person name="Brown D."/>
            <person name="Chillingworth T."/>
            <person name="Connor R."/>
            <person name="Dedman K."/>
            <person name="Devlin K."/>
            <person name="Gentles S."/>
            <person name="Hamlin N."/>
            <person name="Hunt S."/>
            <person name="Jagels K."/>
            <person name="Lye G."/>
            <person name="Moule S."/>
            <person name="Odell C."/>
            <person name="Pearson D."/>
            <person name="Rajandream M.A."/>
            <person name="Rice P."/>
            <person name="Skelton J."/>
            <person name="Walsh S.V."/>
            <person name="Whitehead S."/>
            <person name="Barrell B.G."/>
        </authorList>
    </citation>
    <scope>NUCLEOTIDE SEQUENCE [LARGE SCALE GENOMIC DNA]</scope>
    <source>
        <strain>ATCC 204508 / S288c</strain>
    </source>
</reference>
<reference key="2">
    <citation type="journal article" date="2014" name="G3 (Bethesda)">
        <title>The reference genome sequence of Saccharomyces cerevisiae: Then and now.</title>
        <authorList>
            <person name="Engel S.R."/>
            <person name="Dietrich F.S."/>
            <person name="Fisk D.G."/>
            <person name="Binkley G."/>
            <person name="Balakrishnan R."/>
            <person name="Costanzo M.C."/>
            <person name="Dwight S.S."/>
            <person name="Hitz B.C."/>
            <person name="Karra K."/>
            <person name="Nash R.S."/>
            <person name="Weng S."/>
            <person name="Wong E.D."/>
            <person name="Lloyd P."/>
            <person name="Skrzypek M.S."/>
            <person name="Miyasato S.R."/>
            <person name="Simison M."/>
            <person name="Cherry J.M."/>
        </authorList>
    </citation>
    <scope>GENOME REANNOTATION</scope>
    <source>
        <strain>ATCC 204508 / S288c</strain>
    </source>
</reference>
<reference key="3">
    <citation type="journal article" date="2007" name="Genome Res.">
        <title>Approaching a complete repository of sequence-verified protein-encoding clones for Saccharomyces cerevisiae.</title>
        <authorList>
            <person name="Hu Y."/>
            <person name="Rolfs A."/>
            <person name="Bhullar B."/>
            <person name="Murthy T.V.S."/>
            <person name="Zhu C."/>
            <person name="Berger M.F."/>
            <person name="Camargo A.A."/>
            <person name="Kelley F."/>
            <person name="McCarron S."/>
            <person name="Jepson D."/>
            <person name="Richardson A."/>
            <person name="Raphael J."/>
            <person name="Moreira D."/>
            <person name="Taycher E."/>
            <person name="Zuo D."/>
            <person name="Mohr S."/>
            <person name="Kane M.F."/>
            <person name="Williamson J."/>
            <person name="Simpson A.J.G."/>
            <person name="Bulyk M.L."/>
            <person name="Harlow E."/>
            <person name="Marsischky G."/>
            <person name="Kolodner R.D."/>
            <person name="LaBaer J."/>
        </authorList>
    </citation>
    <scope>NUCLEOTIDE SEQUENCE [GENOMIC DNA]</scope>
    <source>
        <strain>ATCC 204508 / S288c</strain>
    </source>
</reference>
<reference key="4">
    <citation type="journal article" date="2003" name="Nature">
        <title>Global analysis of protein expression in yeast.</title>
        <authorList>
            <person name="Ghaemmaghami S."/>
            <person name="Huh W.-K."/>
            <person name="Bower K."/>
            <person name="Howson R.W."/>
            <person name="Belle A."/>
            <person name="Dephoure N."/>
            <person name="O'Shea E.K."/>
            <person name="Weissman J.S."/>
        </authorList>
    </citation>
    <scope>LEVEL OF PROTEIN EXPRESSION [LARGE SCALE ANALYSIS]</scope>
</reference>
<reference key="5">
    <citation type="journal article" date="1997" name="Nat. Genet.">
        <title>Isolation of the human PEX12 gene, mutated in group 3 of the peroxisome biogenesis disorders.</title>
        <authorList>
            <person name="Chang C.-C."/>
            <person name="Lee W.-H."/>
            <person name="Moser H."/>
            <person name="Valle D."/>
            <person name="Gould S.J."/>
        </authorList>
    </citation>
    <scope>FUNCTION</scope>
</reference>
<reference key="6">
    <citation type="journal article" date="2001" name="Eur. J. Cell Biol.">
        <title>Pex12p of Saccharomyces cerevisiae is a component of a multi-protein complex essential for peroxisomal matrix protein import.</title>
        <authorList>
            <person name="Albertini M."/>
            <person name="Girzalsky W."/>
            <person name="Veenhuis M."/>
            <person name="Kunau W.H."/>
        </authorList>
    </citation>
    <scope>FUNCTION</scope>
    <scope>SUBCELLULAR LOCATION</scope>
</reference>
<reference key="7">
    <citation type="journal article" date="2009" name="Mol. Cell. Biol.">
        <title>Pex2 and pex12 function as protein-ubiquitin ligases in peroxisomal protein import.</title>
        <authorList>
            <person name="Platta H.W."/>
            <person name="El Magraoui F."/>
            <person name="Baeumer B.E."/>
            <person name="Schlee D."/>
            <person name="Girzalsky W."/>
            <person name="Erdmann R."/>
        </authorList>
    </citation>
    <scope>FUNCTION</scope>
    <scope>PATHWAY</scope>
</reference>
<reference key="8">
    <citation type="journal article" date="2012" name="FEBS J.">
        <title>The RING-type ubiquitin ligases Pex2p, Pex10p and Pex12p form a heteromeric complex that displays enhanced activity in an ubiquitin conjugating enzyme-selective manner.</title>
        <authorList>
            <person name="El Magraoui F."/>
            <person name="Baeumer B.E."/>
            <person name="Platta H.W."/>
            <person name="Baumann J.S."/>
            <person name="Girzalsky W."/>
            <person name="Erdmann R."/>
        </authorList>
    </citation>
    <scope>FUNCTION</scope>
    <scope>PATHWAY</scope>
    <scope>IDENTIFICATION IN THE PEX2-PEX10-PEX12 RETROTRANSLOCATION CHANNEL</scope>
</reference>
<reference key="9">
    <citation type="journal article" date="2022" name="Nature">
        <title>A peroxisomal ubiquitin ligase complex forms a retrotranslocation channel.</title>
        <authorList>
            <person name="Feng P."/>
            <person name="Wu X."/>
            <person name="Erramilli S.K."/>
            <person name="Paulo J.A."/>
            <person name="Knejski P."/>
            <person name="Gygi S.P."/>
            <person name="Kossiakoff A.A."/>
            <person name="Rapoport T.A."/>
        </authorList>
    </citation>
    <scope>X-RAY CRYSTALLOGRAPHY (1.52 ANGSTROMS) OF 330-397 IN COMPLEX WITH ZINC</scope>
    <scope>FUNCTION</scope>
    <scope>SUBCELLULAR LOCATION</scope>
    <scope>PATHWAY</scope>
    <scope>DOMAIN</scope>
    <scope>IDENTIFICATION IN THE PEX2-PEX10-PEX12 RETROTRANSLOCATION CHANNEL</scope>
    <scope>MUTAGENESIS OF CYS-354</scope>
</reference>
<evidence type="ECO:0000250" key="1">
    <source>
        <dbReference type="UniProtKB" id="G2Q5N0"/>
    </source>
</evidence>
<evidence type="ECO:0000255" key="2"/>
<evidence type="ECO:0000256" key="3">
    <source>
        <dbReference type="SAM" id="MobiDB-lite"/>
    </source>
</evidence>
<evidence type="ECO:0000269" key="4">
    <source>
    </source>
</evidence>
<evidence type="ECO:0000269" key="5">
    <source>
    </source>
</evidence>
<evidence type="ECO:0000269" key="6">
    <source>
    </source>
</evidence>
<evidence type="ECO:0000269" key="7">
    <source>
    </source>
</evidence>
<evidence type="ECO:0000269" key="8">
    <source>
    </source>
</evidence>
<evidence type="ECO:0000269" key="9">
    <source>
    </source>
</evidence>
<evidence type="ECO:0000303" key="10">
    <source>
    </source>
</evidence>
<evidence type="ECO:0000305" key="11"/>
<evidence type="ECO:0000312" key="12">
    <source>
        <dbReference type="SGD" id="S000004628"/>
    </source>
</evidence>
<evidence type="ECO:0007744" key="13">
    <source>
        <dbReference type="PDB" id="7T9X"/>
    </source>
</evidence>
<evidence type="ECO:0007829" key="14">
    <source>
        <dbReference type="PDB" id="7T9X"/>
    </source>
</evidence>
<proteinExistence type="evidence at protein level"/>